<sequence>MDMMMMSTRLIHLSRHFPQYGFRCHPSGLISSARMQYNINNGLAHMGKQMPNTSTHTTRIHPASFSSDLASRKYSLIYAFPLIRGLRALSRLKLLQTGITVVLLPTVYYLHLQGQASVLVLNRSIGIALFAGVMLYSISHFVRRVVGMMYLDSTQTILKVSHLSFWGHRRDIYVPVSDVVTLGDSGDSRGESILRLKRYSTSNTMYFSTRLGRVVDRHAFGKVFGSLS</sequence>
<gene>
    <name evidence="1" type="primary">tmem186</name>
    <name type="ORF">zgc:194533</name>
    <name type="ORF">zgc:194539</name>
</gene>
<accession>B3DI94</accession>
<organism>
    <name type="scientific">Danio rerio</name>
    <name type="common">Zebrafish</name>
    <name type="synonym">Brachydanio rerio</name>
    <dbReference type="NCBI Taxonomy" id="7955"/>
    <lineage>
        <taxon>Eukaryota</taxon>
        <taxon>Metazoa</taxon>
        <taxon>Chordata</taxon>
        <taxon>Craniata</taxon>
        <taxon>Vertebrata</taxon>
        <taxon>Euteleostomi</taxon>
        <taxon>Actinopterygii</taxon>
        <taxon>Neopterygii</taxon>
        <taxon>Teleostei</taxon>
        <taxon>Ostariophysi</taxon>
        <taxon>Cypriniformes</taxon>
        <taxon>Danionidae</taxon>
        <taxon>Danioninae</taxon>
        <taxon>Danio</taxon>
    </lineage>
</organism>
<dbReference type="EMBL" id="BC163045">
    <property type="protein sequence ID" value="AAI63045.1"/>
    <property type="molecule type" value="mRNA"/>
</dbReference>
<dbReference type="EMBL" id="BC163049">
    <property type="protein sequence ID" value="AAI63049.1"/>
    <property type="molecule type" value="mRNA"/>
</dbReference>
<dbReference type="RefSeq" id="NP_001129456.1">
    <property type="nucleotide sequence ID" value="NM_001135984.1"/>
</dbReference>
<dbReference type="FunCoup" id="B3DI94">
    <property type="interactions" value="1899"/>
</dbReference>
<dbReference type="STRING" id="7955.ENSDARP00000156317"/>
<dbReference type="PaxDb" id="7955-ENSDARP00000103823"/>
<dbReference type="PeptideAtlas" id="B3DI94"/>
<dbReference type="Ensembl" id="ENSDART00000182487">
    <property type="protein sequence ID" value="ENSDARP00000156317"/>
    <property type="gene ID" value="ENSDARG00000109974"/>
</dbReference>
<dbReference type="GeneID" id="799142"/>
<dbReference type="KEGG" id="dre:799142"/>
<dbReference type="AGR" id="ZFIN:ZDB-GENE-081022-122"/>
<dbReference type="CTD" id="25880"/>
<dbReference type="ZFIN" id="ZDB-GENE-081022-122">
    <property type="gene designation" value="tmem186"/>
</dbReference>
<dbReference type="eggNOG" id="ENOG502S11D">
    <property type="taxonomic scope" value="Eukaryota"/>
</dbReference>
<dbReference type="HOGENOM" id="CLU_104872_2_0_1"/>
<dbReference type="InParanoid" id="B3DI94"/>
<dbReference type="OMA" id="WRTVYSM"/>
<dbReference type="OrthoDB" id="6147888at2759"/>
<dbReference type="PhylomeDB" id="B3DI94"/>
<dbReference type="TreeFam" id="TF326623"/>
<dbReference type="Reactome" id="R-DRE-611105">
    <property type="pathway name" value="Respiratory electron transport"/>
</dbReference>
<dbReference type="PRO" id="PR:B3DI94"/>
<dbReference type="Proteomes" id="UP000000437">
    <property type="component" value="Alternate scaffold 22"/>
</dbReference>
<dbReference type="Proteomes" id="UP000000437">
    <property type="component" value="Chromosome 22"/>
</dbReference>
<dbReference type="Bgee" id="ENSDARG00000109974">
    <property type="expression patterns" value="Expressed in tail and 8 other cell types or tissues"/>
</dbReference>
<dbReference type="GO" id="GO:0005743">
    <property type="term" value="C:mitochondrial inner membrane"/>
    <property type="evidence" value="ECO:0007669"/>
    <property type="project" value="UniProtKB-SubCell"/>
</dbReference>
<dbReference type="GO" id="GO:0005739">
    <property type="term" value="C:mitochondrion"/>
    <property type="evidence" value="ECO:0000250"/>
    <property type="project" value="UniProtKB"/>
</dbReference>
<dbReference type="GO" id="GO:0032981">
    <property type="term" value="P:mitochondrial respiratory chain complex I assembly"/>
    <property type="evidence" value="ECO:0000250"/>
    <property type="project" value="UniProtKB"/>
</dbReference>
<dbReference type="InterPro" id="IPR026571">
    <property type="entry name" value="Tmem186"/>
</dbReference>
<dbReference type="InterPro" id="IPR045325">
    <property type="entry name" value="TMEM70/TMEM186/TMEM223"/>
</dbReference>
<dbReference type="PANTHER" id="PTHR13603">
    <property type="entry name" value="TRANSMEMBRANE PROTEIN 186"/>
    <property type="match status" value="1"/>
</dbReference>
<dbReference type="PANTHER" id="PTHR13603:SF1">
    <property type="entry name" value="TRANSMEMBRANE PROTEIN 186"/>
    <property type="match status" value="1"/>
</dbReference>
<dbReference type="Pfam" id="PF06979">
    <property type="entry name" value="TMEM70"/>
    <property type="match status" value="1"/>
</dbReference>
<evidence type="ECO:0000250" key="1">
    <source>
        <dbReference type="UniProtKB" id="Q96B77"/>
    </source>
</evidence>
<evidence type="ECO:0000255" key="2"/>
<evidence type="ECO:0000305" key="3"/>
<name>TM186_DANRE</name>
<comment type="function">
    <text evidence="1">May be required for efficient assembly of the mitochondrial complex I.</text>
</comment>
<comment type="subcellular location">
    <subcellularLocation>
        <location evidence="1">Mitochondrion inner membrane</location>
        <topology evidence="1">Multi-pass membrane protein</topology>
    </subcellularLocation>
</comment>
<comment type="similarity">
    <text evidence="3">Belongs to the TMEM186 family.</text>
</comment>
<feature type="chain" id="PRO_0000359594" description="Transmembrane protein 186">
    <location>
        <begin position="1"/>
        <end position="228"/>
    </location>
</feature>
<feature type="topological domain" description="Mitochondrial matrix" evidence="3">
    <location>
        <begin position="1"/>
        <end position="93"/>
    </location>
</feature>
<feature type="transmembrane region" description="Helical" evidence="2">
    <location>
        <begin position="94"/>
        <end position="112"/>
    </location>
</feature>
<feature type="topological domain" description="Mitochondrial intermembrane" evidence="3">
    <location>
        <begin position="113"/>
        <end position="118"/>
    </location>
</feature>
<feature type="transmembrane region" description="Helical" evidence="2">
    <location>
        <begin position="119"/>
        <end position="141"/>
    </location>
</feature>
<feature type="topological domain" description="Mitochondrial matrix" evidence="3">
    <location>
        <begin position="142"/>
        <end position="228"/>
    </location>
</feature>
<keyword id="KW-0472">Membrane</keyword>
<keyword id="KW-0496">Mitochondrion</keyword>
<keyword id="KW-0999">Mitochondrion inner membrane</keyword>
<keyword id="KW-1185">Reference proteome</keyword>
<keyword id="KW-0812">Transmembrane</keyword>
<keyword id="KW-1133">Transmembrane helix</keyword>
<proteinExistence type="evidence at transcript level"/>
<reference key="1">
    <citation type="submission" date="2008-04" db="EMBL/GenBank/DDBJ databases">
        <authorList>
            <consortium name="NIH - Zebrafish Gene Collection (ZGC) project"/>
        </authorList>
    </citation>
    <scope>NUCLEOTIDE SEQUENCE [LARGE SCALE MRNA]</scope>
</reference>
<protein>
    <recommendedName>
        <fullName evidence="1">Transmembrane protein 186</fullName>
    </recommendedName>
</protein>